<organism>
    <name type="scientific">Homo sapiens</name>
    <name type="common">Human</name>
    <dbReference type="NCBI Taxonomy" id="9606"/>
    <lineage>
        <taxon>Eukaryota</taxon>
        <taxon>Metazoa</taxon>
        <taxon>Chordata</taxon>
        <taxon>Craniata</taxon>
        <taxon>Vertebrata</taxon>
        <taxon>Euteleostomi</taxon>
        <taxon>Mammalia</taxon>
        <taxon>Eutheria</taxon>
        <taxon>Euarchontoglires</taxon>
        <taxon>Primates</taxon>
        <taxon>Haplorrhini</taxon>
        <taxon>Catarrhini</taxon>
        <taxon>Hominidae</taxon>
        <taxon>Homo</taxon>
    </lineage>
</organism>
<accession>Q9NY56</accession>
<accession>Q5T8A3</accession>
<accession>Q9NY50</accession>
<accession>Q9NY53</accession>
<accession>Q9NY54</accession>
<accession>Q9NY55</accession>
<sequence>MKTLFLGVTLGLAAALSFTLEEEDITGTWYVKAMVVDKDFPEDRRPRKVSPVKVTALGGGNLEATFTFMREDRCIQKKILMRKTEEPGKFSAYGGRKLIYLQELPGTDDYVFYCKDQRRGGLRYMGKLVGRNPNTNLEALEEFKKLVQHKGLSEEDIFMPLQTGSCVLEH</sequence>
<feature type="signal peptide" evidence="1">
    <location>
        <begin position="1"/>
        <end position="15"/>
    </location>
</feature>
<feature type="chain" id="PRO_0000017937" description="Odorant-binding protein 2a">
    <location>
        <begin position="16"/>
        <end position="170"/>
    </location>
</feature>
<feature type="disulfide bond" evidence="3 5 9">
    <location>
        <begin position="74"/>
        <end position="166"/>
    </location>
</feature>
<feature type="splice variant" id="VSP_003135" description="In isoform Ad." evidence="7">
    <original>ITGTWYVKAMVVDKDFPEDRRPRKVSPVKVTALGGGNLEATFTFMREDRCIQKKILMRKTEEPGKFSAYGGRKLIYLQELPGTDDYVFYCKDQRRGGLRYMGKLV</original>
    <variation>EGESVHPEENPDAEDGGAWQIQRLWGQEAHIPAGAARDGRLRLLLQRPAPWGPALHGKACGICSLQGRAAVPTLAHLATSPA</variation>
    <location>
        <begin position="25"/>
        <end position="129"/>
    </location>
</feature>
<feature type="splice variant" id="VSP_003137" description="In isoform Ag." evidence="7">
    <original>GRNPNTNLEALEEFKKLVQHKGLSEEDIFMPLQTGSCVLEH</original>
    <variation>ASAPCRAVPLSPRRLTWPPHLQVGILIPTWRPWKNLRNWCSTRDSRRRTFSCPCRREAAFSNTRQPPGLHLQSPPYHQTQSPDHLDLPSSHDPSLLPPT</variation>
    <location>
        <begin position="130"/>
        <end position="170"/>
    </location>
</feature>
<feature type="splice variant" id="VSP_003136" description="In isoform Ab." evidence="7">
    <original>RNPNTNLEALEEFKKLVQHKGLSEEDIFMPLQTGSCVLEH</original>
    <variation>PCRCPHVGSPGHLTCR</variation>
    <location>
        <begin position="131"/>
        <end position="170"/>
    </location>
</feature>
<feature type="sequence variant" id="VAR_034354" description="In dbSNP:rs3180357.">
    <original>N</original>
    <variation>K</variation>
    <location>
        <position position="61"/>
    </location>
</feature>
<feature type="sequence variant" id="VAR_061359" description="In dbSNP:rs55695858.">
    <original>G</original>
    <variation>A</variation>
    <location>
        <position position="130"/>
    </location>
</feature>
<feature type="sequence variant" id="VAR_061360" description="In dbSNP:rs3178137.">
    <original>P</original>
    <variation>S</variation>
    <location>
        <position position="133"/>
    </location>
</feature>
<feature type="sequence variant" id="VAR_050176" description="In dbSNP:rs2853652." evidence="2">
    <original>M</original>
    <variation>T</variation>
    <location>
        <position position="159"/>
    </location>
</feature>
<feature type="mutagenesis site" description="No effect on binding affinity for undecanal, palmitic acid, efficient aldehydes, benzenic aldehydes, heterocyclic aldehydes or aliphatic acids." evidence="4">
    <original>K</original>
    <variation>A</variation>
    <location>
        <position position="77"/>
    </location>
</feature>
<feature type="mutagenesis site" description="No effect on binding affinity for undecanal, palmitic acid, efficient aldehydes, benzenic aldehydes, heterocyclic aldehydes or aliphatic acids." evidence="4">
    <original>K</original>
    <variation>A</variation>
    <location>
        <position position="97"/>
    </location>
</feature>
<feature type="mutagenesis site" description="Decreases binding affinity for undecanal, efficient aldehydes and aliphatic acids from 9- to 12-carbons long. No effect on binding affinity of benzenic or heterocyclic aldehydes." evidence="4">
    <original>K</original>
    <variation>A</variation>
    <location>
        <position position="127"/>
    </location>
</feature>
<feature type="sequence conflict" description="In Ref. 1; CAB71326." evidence="8" ref="1">
    <original>F</original>
    <variation>Y</variation>
    <location>
        <position position="90"/>
    </location>
</feature>
<feature type="sequence conflict" description="In Ref. 1; CAB71320." evidence="8" ref="1">
    <original>H</original>
    <variation>R</variation>
    <location>
        <position position="149"/>
    </location>
</feature>
<feature type="strand" evidence="10">
    <location>
        <begin position="27"/>
        <end position="36"/>
    </location>
</feature>
<feature type="helix" evidence="10">
    <location>
        <begin position="42"/>
        <end position="44"/>
    </location>
</feature>
<feature type="strand" evidence="10">
    <location>
        <begin position="47"/>
        <end position="49"/>
    </location>
</feature>
<feature type="strand" evidence="10">
    <location>
        <begin position="52"/>
        <end position="56"/>
    </location>
</feature>
<feature type="strand" evidence="10">
    <location>
        <begin position="62"/>
        <end position="70"/>
    </location>
</feature>
<feature type="strand" evidence="10">
    <location>
        <begin position="73"/>
        <end position="82"/>
    </location>
</feature>
<feature type="strand" evidence="10">
    <location>
        <begin position="89"/>
        <end position="92"/>
    </location>
</feature>
<feature type="turn" evidence="10">
    <location>
        <begin position="93"/>
        <end position="96"/>
    </location>
</feature>
<feature type="strand" evidence="10">
    <location>
        <begin position="97"/>
        <end position="103"/>
    </location>
</feature>
<feature type="strand" evidence="10">
    <location>
        <begin position="110"/>
        <end position="118"/>
    </location>
</feature>
<feature type="strand" evidence="10">
    <location>
        <begin position="121"/>
        <end position="133"/>
    </location>
</feature>
<feature type="helix" evidence="10">
    <location>
        <begin position="137"/>
        <end position="149"/>
    </location>
</feature>
<feature type="helix" evidence="10">
    <location>
        <begin position="154"/>
        <end position="156"/>
    </location>
</feature>
<reference key="1">
    <citation type="journal article" date="2000" name="Hum. Mol. Genet.">
        <title>A novel human odorant-binding protein gene family resulting from genomic duplicons at 9q34: differential expression in the oral and genital spheres.</title>
        <authorList>
            <person name="Lacazette E."/>
            <person name="Gachon A.-M."/>
            <person name="Pitiot G."/>
        </authorList>
    </citation>
    <scope>NUCLEOTIDE SEQUENCE [GENOMIC DNA / MRNA] (ISOFORMS AA; AB; AD AND AG)</scope>
    <scope>TISSUE SPECIFICITY</scope>
    <scope>VARIANT THR-159</scope>
</reference>
<reference key="2">
    <citation type="journal article" date="2004" name="Nature">
        <title>DNA sequence and analysis of human chromosome 9.</title>
        <authorList>
            <person name="Humphray S.J."/>
            <person name="Oliver K."/>
            <person name="Hunt A.R."/>
            <person name="Plumb R.W."/>
            <person name="Loveland J.E."/>
            <person name="Howe K.L."/>
            <person name="Andrews T.D."/>
            <person name="Searle S."/>
            <person name="Hunt S.E."/>
            <person name="Scott C.E."/>
            <person name="Jones M.C."/>
            <person name="Ainscough R."/>
            <person name="Almeida J.P."/>
            <person name="Ambrose K.D."/>
            <person name="Ashwell R.I.S."/>
            <person name="Babbage A.K."/>
            <person name="Babbage S."/>
            <person name="Bagguley C.L."/>
            <person name="Bailey J."/>
            <person name="Banerjee R."/>
            <person name="Barker D.J."/>
            <person name="Barlow K.F."/>
            <person name="Bates K."/>
            <person name="Beasley H."/>
            <person name="Beasley O."/>
            <person name="Bird C.P."/>
            <person name="Bray-Allen S."/>
            <person name="Brown A.J."/>
            <person name="Brown J.Y."/>
            <person name="Burford D."/>
            <person name="Burrill W."/>
            <person name="Burton J."/>
            <person name="Carder C."/>
            <person name="Carter N.P."/>
            <person name="Chapman J.C."/>
            <person name="Chen Y."/>
            <person name="Clarke G."/>
            <person name="Clark S.Y."/>
            <person name="Clee C.M."/>
            <person name="Clegg S."/>
            <person name="Collier R.E."/>
            <person name="Corby N."/>
            <person name="Crosier M."/>
            <person name="Cummings A.T."/>
            <person name="Davies J."/>
            <person name="Dhami P."/>
            <person name="Dunn M."/>
            <person name="Dutta I."/>
            <person name="Dyer L.W."/>
            <person name="Earthrowl M.E."/>
            <person name="Faulkner L."/>
            <person name="Fleming C.J."/>
            <person name="Frankish A."/>
            <person name="Frankland J.A."/>
            <person name="French L."/>
            <person name="Fricker D.G."/>
            <person name="Garner P."/>
            <person name="Garnett J."/>
            <person name="Ghori J."/>
            <person name="Gilbert J.G.R."/>
            <person name="Glison C."/>
            <person name="Grafham D.V."/>
            <person name="Gribble S."/>
            <person name="Griffiths C."/>
            <person name="Griffiths-Jones S."/>
            <person name="Grocock R."/>
            <person name="Guy J."/>
            <person name="Hall R.E."/>
            <person name="Hammond S."/>
            <person name="Harley J.L."/>
            <person name="Harrison E.S.I."/>
            <person name="Hart E.A."/>
            <person name="Heath P.D."/>
            <person name="Henderson C.D."/>
            <person name="Hopkins B.L."/>
            <person name="Howard P.J."/>
            <person name="Howden P.J."/>
            <person name="Huckle E."/>
            <person name="Johnson C."/>
            <person name="Johnson D."/>
            <person name="Joy A.A."/>
            <person name="Kay M."/>
            <person name="Keenan S."/>
            <person name="Kershaw J.K."/>
            <person name="Kimberley A.M."/>
            <person name="King A."/>
            <person name="Knights A."/>
            <person name="Laird G.K."/>
            <person name="Langford C."/>
            <person name="Lawlor S."/>
            <person name="Leongamornlert D.A."/>
            <person name="Leversha M."/>
            <person name="Lloyd C."/>
            <person name="Lloyd D.M."/>
            <person name="Lovell J."/>
            <person name="Martin S."/>
            <person name="Mashreghi-Mohammadi M."/>
            <person name="Matthews L."/>
            <person name="McLaren S."/>
            <person name="McLay K.E."/>
            <person name="McMurray A."/>
            <person name="Milne S."/>
            <person name="Nickerson T."/>
            <person name="Nisbett J."/>
            <person name="Nordsiek G."/>
            <person name="Pearce A.V."/>
            <person name="Peck A.I."/>
            <person name="Porter K.M."/>
            <person name="Pandian R."/>
            <person name="Pelan S."/>
            <person name="Phillimore B."/>
            <person name="Povey S."/>
            <person name="Ramsey Y."/>
            <person name="Rand V."/>
            <person name="Scharfe M."/>
            <person name="Sehra H.K."/>
            <person name="Shownkeen R."/>
            <person name="Sims S.K."/>
            <person name="Skuce C.D."/>
            <person name="Smith M."/>
            <person name="Steward C.A."/>
            <person name="Swarbreck D."/>
            <person name="Sycamore N."/>
            <person name="Tester J."/>
            <person name="Thorpe A."/>
            <person name="Tracey A."/>
            <person name="Tromans A."/>
            <person name="Thomas D.W."/>
            <person name="Wall M."/>
            <person name="Wallis J.M."/>
            <person name="West A.P."/>
            <person name="Whitehead S.L."/>
            <person name="Willey D.L."/>
            <person name="Williams S.A."/>
            <person name="Wilming L."/>
            <person name="Wray P.W."/>
            <person name="Young L."/>
            <person name="Ashurst J.L."/>
            <person name="Coulson A."/>
            <person name="Blocker H."/>
            <person name="Durbin R.M."/>
            <person name="Sulston J.E."/>
            <person name="Hubbard T."/>
            <person name="Jackson M.J."/>
            <person name="Bentley D.R."/>
            <person name="Beck S."/>
            <person name="Rogers J."/>
            <person name="Dunham I."/>
        </authorList>
    </citation>
    <scope>NUCLEOTIDE SEQUENCE [LARGE SCALE GENOMIC DNA]</scope>
</reference>
<reference key="3">
    <citation type="journal article" date="2004" name="Genome Res.">
        <title>The status, quality, and expansion of the NIH full-length cDNA project: the Mammalian Gene Collection (MGC).</title>
        <authorList>
            <consortium name="The MGC Project Team"/>
        </authorList>
    </citation>
    <scope>NUCLEOTIDE SEQUENCE [LARGE SCALE MRNA] (ISOFORM AA)</scope>
</reference>
<reference key="4">
    <citation type="journal article" date="2002" name="Biochemistry">
        <title>Evidence of an odorant-binding protein in the human olfactory mucus: location, structural characterization, and odorant-binding properties.</title>
        <authorList>
            <person name="Briand L."/>
            <person name="Eloit C."/>
            <person name="Nespoulous C."/>
            <person name="Bezirard V."/>
            <person name="Huet J.C."/>
            <person name="Henry C."/>
            <person name="Blon F."/>
            <person name="Trotier D."/>
            <person name="Pernollet J.C."/>
        </authorList>
    </citation>
    <scope>FUNCTION</scope>
    <scope>SUBUNIT</scope>
    <scope>DISULFIDE BOND</scope>
</reference>
<reference key="5">
    <citation type="journal article" date="2006" name="FEBS Lett.">
        <title>A single lysyl residue defines the binding specificity of a human odorant-binding protein for aldehydes.</title>
        <authorList>
            <person name="Tcatchoff L."/>
            <person name="Nespoulous C."/>
            <person name="Pernollet J.C."/>
            <person name="Briand L."/>
        </authorList>
    </citation>
    <scope>FUNCTION</scope>
    <scope>MUTAGENESIS OF LYS-77; LYS-97 AND LYS-127</scope>
</reference>
<reference key="6">
    <citation type="journal article" date="2016" name="Nat. Commun.">
        <title>Control of diabetic hyperglycaemia and insulin resistance through TSC22D4.</title>
        <authorList>
            <person name="Ekim Uestuenel B."/>
            <person name="Friedrich K."/>
            <person name="Maida A."/>
            <person name="Wang X."/>
            <person name="Krones-Herzig A."/>
            <person name="Seibert O."/>
            <person name="Sommerfeld A."/>
            <person name="Jones A."/>
            <person name="Sijmonsma T.P."/>
            <person name="Sticht C."/>
            <person name="Gretz N."/>
            <person name="Fleming T."/>
            <person name="Nawroth P.P."/>
            <person name="Stremmel W."/>
            <person name="Rose A.J."/>
            <person name="Berriel-Diaz M."/>
            <person name="Blueher M."/>
            <person name="Herzig S."/>
        </authorList>
    </citation>
    <scope>TISSUE SPECIFICITY</scope>
</reference>
<reference evidence="9" key="7">
    <citation type="journal article" date="2015" name="Proteins">
        <title>Crystal structure of the human odorant binding protein, OBPIIa.</title>
        <authorList>
            <person name="Schiefner A."/>
            <person name="Freier R."/>
            <person name="Eichinger A."/>
            <person name="Skerra A."/>
        </authorList>
    </citation>
    <scope>X-RAY CRYSTALLOGRAPHY (2.60 ANGSTROMS) OF 23-169</scope>
    <scope>DISULFIDE BONDS</scope>
    <scope>SUBUNIT</scope>
</reference>
<keyword id="KW-0002">3D-structure</keyword>
<keyword id="KW-0025">Alternative splicing</keyword>
<keyword id="KW-1015">Disulfide bond</keyword>
<keyword id="KW-0552">Olfaction</keyword>
<keyword id="KW-1267">Proteomics identification</keyword>
<keyword id="KW-1185">Reference proteome</keyword>
<keyword id="KW-0964">Secreted</keyword>
<keyword id="KW-0716">Sensory transduction</keyword>
<keyword id="KW-0732">Signal</keyword>
<keyword id="KW-0813">Transport</keyword>
<evidence type="ECO:0000255" key="1"/>
<evidence type="ECO:0000269" key="2">
    <source>
    </source>
</evidence>
<evidence type="ECO:0000269" key="3">
    <source>
    </source>
</evidence>
<evidence type="ECO:0000269" key="4">
    <source>
    </source>
</evidence>
<evidence type="ECO:0000269" key="5">
    <source>
    </source>
</evidence>
<evidence type="ECO:0000269" key="6">
    <source>
    </source>
</evidence>
<evidence type="ECO:0000303" key="7">
    <source>
    </source>
</evidence>
<evidence type="ECO:0000305" key="8"/>
<evidence type="ECO:0007744" key="9">
    <source>
        <dbReference type="PDB" id="4RUN"/>
    </source>
</evidence>
<evidence type="ECO:0007829" key="10">
    <source>
        <dbReference type="PDB" id="4RUN"/>
    </source>
</evidence>
<gene>
    <name type="primary">OBP2A</name>
</gene>
<proteinExistence type="evidence at protein level"/>
<dbReference type="EMBL" id="AJ251021">
    <property type="protein sequence ID" value="CAB71318.1"/>
    <property type="molecule type" value="mRNA"/>
</dbReference>
<dbReference type="EMBL" id="AJ251022">
    <property type="protein sequence ID" value="CAB71319.1"/>
    <property type="molecule type" value="mRNA"/>
</dbReference>
<dbReference type="EMBL" id="AJ251023">
    <property type="protein sequence ID" value="CAB71320.1"/>
    <property type="molecule type" value="mRNA"/>
</dbReference>
<dbReference type="EMBL" id="AJ251024">
    <property type="protein sequence ID" value="CAB71321.1"/>
    <property type="molecule type" value="mRNA"/>
</dbReference>
<dbReference type="EMBL" id="AJ251029">
    <property type="protein sequence ID" value="CAB71326.1"/>
    <property type="molecule type" value="Genomic_DNA"/>
</dbReference>
<dbReference type="EMBL" id="AL161452">
    <property type="status" value="NOT_ANNOTATED_CDS"/>
    <property type="molecule type" value="Genomic_DNA"/>
</dbReference>
<dbReference type="EMBL" id="BC069563">
    <property type="protein sequence ID" value="AAH69563.1"/>
    <property type="molecule type" value="mRNA"/>
</dbReference>
<dbReference type="CCDS" id="CCDS6992.1">
    <molecule id="Q9NY56-1"/>
</dbReference>
<dbReference type="CCDS" id="CCDS78455.1">
    <molecule id="Q9NY56-4"/>
</dbReference>
<dbReference type="CCDS" id="CCDS78456.1">
    <molecule id="Q9NY56-3"/>
</dbReference>
<dbReference type="RefSeq" id="NP_001280118.1">
    <property type="nucleotide sequence ID" value="NM_001293189.1"/>
</dbReference>
<dbReference type="RefSeq" id="NP_001280122.1">
    <property type="nucleotide sequence ID" value="NM_001293193.1"/>
</dbReference>
<dbReference type="RefSeq" id="NP_055397.1">
    <molecule id="Q9NY56-1"/>
    <property type="nucleotide sequence ID" value="NM_014582.3"/>
</dbReference>
<dbReference type="PDB" id="4RUN">
    <property type="method" value="X-ray"/>
    <property type="resolution" value="2.60 A"/>
    <property type="chains" value="A/B=16-170"/>
</dbReference>
<dbReference type="PDBsum" id="4RUN"/>
<dbReference type="SMR" id="Q9NY56"/>
<dbReference type="BioGRID" id="119016">
    <property type="interactions" value="13"/>
</dbReference>
<dbReference type="FunCoup" id="Q9NY56">
    <property type="interactions" value="5"/>
</dbReference>
<dbReference type="IntAct" id="Q9NY56">
    <property type="interactions" value="7"/>
</dbReference>
<dbReference type="MINT" id="Q9NY56"/>
<dbReference type="DrugBank" id="DB00755">
    <property type="generic name" value="Tretinoin"/>
</dbReference>
<dbReference type="SwissLipids" id="SLP:000001528">
    <molecule id="Q9NY56-1"/>
</dbReference>
<dbReference type="iPTMnet" id="Q9NY56"/>
<dbReference type="PhosphoSitePlus" id="Q9NY56"/>
<dbReference type="BioMuta" id="OBP2A"/>
<dbReference type="MassIVE" id="Q9NY56"/>
<dbReference type="PaxDb" id="9606-ENSP00000441028"/>
<dbReference type="PeptideAtlas" id="Q9NY56"/>
<dbReference type="ProteomicsDB" id="83174">
    <molecule id="Q9NY56-1"/>
</dbReference>
<dbReference type="ProteomicsDB" id="83175">
    <molecule id="Q9NY56-2"/>
</dbReference>
<dbReference type="ProteomicsDB" id="83176">
    <molecule id="Q9NY56-3"/>
</dbReference>
<dbReference type="ProteomicsDB" id="83177">
    <molecule id="Q9NY56-4"/>
</dbReference>
<dbReference type="Antibodypedia" id="56439">
    <property type="antibodies" value="62 antibodies from 12 providers"/>
</dbReference>
<dbReference type="DNASU" id="29991"/>
<dbReference type="Ensembl" id="ENST00000371776.6">
    <molecule id="Q9NY56-1"/>
    <property type="protein sequence ID" value="ENSP00000360841.1"/>
    <property type="gene ID" value="ENSG00000122136.14"/>
</dbReference>
<dbReference type="Ensembl" id="ENST00000539850.1">
    <molecule id="Q9NY56-1"/>
    <property type="protein sequence ID" value="ENSP00000441028.1"/>
    <property type="gene ID" value="ENSG00000122136.14"/>
</dbReference>
<dbReference type="GeneID" id="29991"/>
<dbReference type="KEGG" id="hsa:29991"/>
<dbReference type="MANE-Select" id="ENST00000371776.6">
    <property type="protein sequence ID" value="ENSP00000360841.1"/>
    <property type="RefSeq nucleotide sequence ID" value="NM_014582.3"/>
    <property type="RefSeq protein sequence ID" value="NP_055397.1"/>
</dbReference>
<dbReference type="UCSC" id="uc004cgb.3">
    <molecule id="Q9NY56-1"/>
    <property type="organism name" value="human"/>
</dbReference>
<dbReference type="AGR" id="HGNC:23380"/>
<dbReference type="CTD" id="29991"/>
<dbReference type="DisGeNET" id="29991"/>
<dbReference type="GeneCards" id="OBP2A"/>
<dbReference type="HGNC" id="HGNC:23380">
    <property type="gene designation" value="OBP2A"/>
</dbReference>
<dbReference type="HPA" id="ENSG00000122136">
    <property type="expression patterns" value="Tissue enriched (fallopian)"/>
</dbReference>
<dbReference type="MIM" id="164320">
    <property type="type" value="gene"/>
</dbReference>
<dbReference type="neXtProt" id="NX_Q9NY56"/>
<dbReference type="OpenTargets" id="ENSG00000122136"/>
<dbReference type="PharmGKB" id="PA134915019"/>
<dbReference type="VEuPathDB" id="HostDB:ENSG00000122136"/>
<dbReference type="eggNOG" id="ENOG502S22P">
    <property type="taxonomic scope" value="Eukaryota"/>
</dbReference>
<dbReference type="GeneTree" id="ENSGT01050000244868"/>
<dbReference type="HOGENOM" id="CLU_125034_0_0_1"/>
<dbReference type="InParanoid" id="Q9NY56"/>
<dbReference type="OMA" id="WYIKAMV"/>
<dbReference type="OrthoDB" id="9621919at2759"/>
<dbReference type="PAN-GO" id="Q9NY56">
    <property type="GO annotations" value="1 GO annotation based on evolutionary models"/>
</dbReference>
<dbReference type="PhylomeDB" id="Q9NY56"/>
<dbReference type="TreeFam" id="TF338197"/>
<dbReference type="PathwayCommons" id="Q9NY56"/>
<dbReference type="SignaLink" id="Q9NY56"/>
<dbReference type="BioGRID-ORCS" id="29991">
    <property type="hits" value="31 hits in 1070 CRISPR screens"/>
</dbReference>
<dbReference type="EvolutionaryTrace" id="Q9NY56"/>
<dbReference type="GeneWiki" id="OBP2A"/>
<dbReference type="GenomeRNAi" id="29991"/>
<dbReference type="Pharos" id="Q9NY56">
    <property type="development level" value="Tbio"/>
</dbReference>
<dbReference type="PRO" id="PR:Q9NY56"/>
<dbReference type="Proteomes" id="UP000005640">
    <property type="component" value="Chromosome 9"/>
</dbReference>
<dbReference type="RNAct" id="Q9NY56">
    <property type="molecule type" value="protein"/>
</dbReference>
<dbReference type="Bgee" id="ENSG00000122136">
    <property type="expression patterns" value="Expressed in right uterine tube and 86 other cell types or tissues"/>
</dbReference>
<dbReference type="ExpressionAtlas" id="Q9NY56">
    <property type="expression patterns" value="baseline and differential"/>
</dbReference>
<dbReference type="GO" id="GO:0005615">
    <property type="term" value="C:extracellular space"/>
    <property type="evidence" value="ECO:0000318"/>
    <property type="project" value="GO_Central"/>
</dbReference>
<dbReference type="GO" id="GO:0005549">
    <property type="term" value="F:odorant binding"/>
    <property type="evidence" value="ECO:0000314"/>
    <property type="project" value="UniProtKB"/>
</dbReference>
<dbReference type="GO" id="GO:0036094">
    <property type="term" value="F:small molecule binding"/>
    <property type="evidence" value="ECO:0007669"/>
    <property type="project" value="InterPro"/>
</dbReference>
<dbReference type="GO" id="GO:0042593">
    <property type="term" value="P:glucose homeostasis"/>
    <property type="evidence" value="ECO:0000250"/>
    <property type="project" value="UniProtKB"/>
</dbReference>
<dbReference type="GO" id="GO:0007606">
    <property type="term" value="P:sensory perception of chemical stimulus"/>
    <property type="evidence" value="ECO:0000304"/>
    <property type="project" value="ProtInc"/>
</dbReference>
<dbReference type="GO" id="GO:0007608">
    <property type="term" value="P:sensory perception of smell"/>
    <property type="evidence" value="ECO:0007669"/>
    <property type="project" value="UniProtKB-KW"/>
</dbReference>
<dbReference type="CDD" id="cd19414">
    <property type="entry name" value="lipocalin_1_3_4_13-like"/>
    <property type="match status" value="1"/>
</dbReference>
<dbReference type="FunFam" id="2.40.128.20:FF:000020">
    <property type="entry name" value="Lipocalin 1"/>
    <property type="match status" value="1"/>
</dbReference>
<dbReference type="Gene3D" id="2.40.128.20">
    <property type="match status" value="1"/>
</dbReference>
<dbReference type="InterPro" id="IPR012674">
    <property type="entry name" value="Calycin"/>
</dbReference>
<dbReference type="InterPro" id="IPR002345">
    <property type="entry name" value="Lipocalin"/>
</dbReference>
<dbReference type="InterPro" id="IPR000566">
    <property type="entry name" value="Lipocln_cytosolic_FA-bd_dom"/>
</dbReference>
<dbReference type="InterPro" id="IPR002450">
    <property type="entry name" value="von_Ebner_gland"/>
</dbReference>
<dbReference type="PANTHER" id="PTHR11430">
    <property type="entry name" value="LIPOCALIN"/>
    <property type="match status" value="1"/>
</dbReference>
<dbReference type="PANTHER" id="PTHR11430:SF129">
    <property type="entry name" value="ODORANT-BINDING PROTEIN 2A-RELATED"/>
    <property type="match status" value="1"/>
</dbReference>
<dbReference type="Pfam" id="PF00061">
    <property type="entry name" value="Lipocalin"/>
    <property type="match status" value="1"/>
</dbReference>
<dbReference type="PRINTS" id="PR01175">
    <property type="entry name" value="VNEBNERGLAND"/>
</dbReference>
<dbReference type="SUPFAM" id="SSF50814">
    <property type="entry name" value="Lipocalins"/>
    <property type="match status" value="1"/>
</dbReference>
<protein>
    <recommendedName>
        <fullName>Odorant-binding protein 2a</fullName>
    </recommendedName>
    <alternativeName>
        <fullName>Odorant-binding protein IIa</fullName>
        <shortName>OBPIIa</shortName>
    </alternativeName>
</protein>
<comment type="function">
    <text evidence="3 4">Binds and transports small hydrophobic volatile molecules with a higher affinity for aldehydes and large fatty acids, including undecanal, palmitic acid, efficient aldehydes, benzenic aldehydes, heterocyclic aldehydes and aliphatic acids.</text>
</comment>
<comment type="subunit">
    <text evidence="3 5">Monomer.</text>
</comment>
<comment type="subcellular location">
    <subcellularLocation>
        <location evidence="8">Secreted</location>
    </subcellularLocation>
</comment>
<comment type="alternative products">
    <event type="alternative splicing"/>
    <isoform>
        <id>Q9NY56-1</id>
        <name>Aa</name>
        <sequence type="displayed"/>
    </isoform>
    <isoform>
        <id>Q9NY56-2</id>
        <name>Ab</name>
        <sequence type="described" ref="VSP_003136"/>
    </isoform>
    <isoform>
        <id>Q9NY56-3</id>
        <name>Ad</name>
        <sequence type="described" ref="VSP_003135"/>
    </isoform>
    <isoform>
        <id>Q9NY56-4</id>
        <name>Ag</name>
        <sequence type="described" ref="VSP_003137"/>
    </isoform>
</comment>
<comment type="tissue specificity">
    <text evidence="2 6">Strongly expressed in the nasal structures, salivary and lachrymal glands, and lung (PubMed:10607840). Expressed in the liver (PubMed:27827363).</text>
</comment>
<comment type="similarity">
    <text evidence="8">Belongs to the calycin superfamily. Lipocalin family.</text>
</comment>
<name>OBP2A_HUMAN</name>